<keyword id="KW-0058">Aromatic hydrocarbons catabolism</keyword>
<keyword id="KW-0378">Hydrolase</keyword>
<reference key="1">
    <citation type="submission" date="1994-12" db="EMBL/GenBank/DDBJ databases">
        <title>Sequence of BPHDD.</title>
        <authorList>
            <person name="Ahmad D."/>
        </authorList>
    </citation>
    <scope>NUCLEOTIDE SEQUENCE [GENOMIC DNA]</scope>
    <source>
        <strain>B-356</strain>
    </source>
</reference>
<protein>
    <recommendedName>
        <fullName evidence="1">2-hydroxy-6-oxo-6-phenylhexa-2,4-dienoate hydrolase</fullName>
        <shortName evidence="1">HOPDA hydrolase</shortName>
        <ecNumber evidence="1">3.7.1.8</ecNumber>
    </recommendedName>
    <alternativeName>
        <fullName evidence="1">2,6-dioxo-6-phenylhexa-3-enoate hydrolase</fullName>
    </alternativeName>
</protein>
<feature type="chain" id="PRO_0000373811" description="2-hydroxy-6-oxo-6-phenylhexa-2,4-dienoate hydrolase">
    <location>
        <begin position="1"/>
        <end position="286"/>
    </location>
</feature>
<feature type="active site" description="Proton acceptor" evidence="1">
    <location>
        <position position="265"/>
    </location>
</feature>
<feature type="binding site" evidence="1">
    <location>
        <begin position="42"/>
        <end position="43"/>
    </location>
    <ligand>
        <name>substrate</name>
    </ligand>
</feature>
<feature type="binding site" evidence="1">
    <location>
        <position position="51"/>
    </location>
    <ligand>
        <name>substrate</name>
    </ligand>
</feature>
<feature type="binding site" evidence="1">
    <location>
        <position position="111"/>
    </location>
    <ligand>
        <name>substrate</name>
    </ligand>
</feature>
<feature type="binding site" evidence="1">
    <location>
        <position position="180"/>
    </location>
    <ligand>
        <name>substrate</name>
    </ligand>
</feature>
<feature type="binding site" evidence="1">
    <location>
        <position position="190"/>
    </location>
    <ligand>
        <name>substrate</name>
    </ligand>
</feature>
<feature type="binding site" evidence="1">
    <location>
        <position position="266"/>
    </location>
    <ligand>
        <name>substrate</name>
    </ligand>
</feature>
<feature type="site" description="Transition state stabilizer" evidence="1">
    <location>
        <position position="112"/>
    </location>
</feature>
<dbReference type="EC" id="3.7.1.8" evidence="1"/>
<dbReference type="EMBL" id="L34338">
    <property type="protein sequence ID" value="AAA56853.1"/>
    <property type="molecule type" value="Genomic_DNA"/>
</dbReference>
<dbReference type="SMR" id="Q59324"/>
<dbReference type="ESTHER" id="comte-bphD">
    <property type="family name" value="Carbon-carbon_bond_hydrolase"/>
</dbReference>
<dbReference type="MEROPS" id="S33.016"/>
<dbReference type="BRENDA" id="3.7.1.8">
    <property type="organism ID" value="1590"/>
</dbReference>
<dbReference type="UniPathway" id="UPA00155">
    <property type="reaction ID" value="UER00253"/>
</dbReference>
<dbReference type="GO" id="GO:0016020">
    <property type="term" value="C:membrane"/>
    <property type="evidence" value="ECO:0007669"/>
    <property type="project" value="TreeGrafter"/>
</dbReference>
<dbReference type="GO" id="GO:0018774">
    <property type="term" value="F:2,6-dioxo-6-phenylhexa-3-enoate hydrolase activity"/>
    <property type="evidence" value="ECO:0007669"/>
    <property type="project" value="RHEA"/>
</dbReference>
<dbReference type="GO" id="GO:0018771">
    <property type="term" value="F:2-hydroxy-6-oxonona-2,4-dienedioate hydrolase activity"/>
    <property type="evidence" value="ECO:0007669"/>
    <property type="project" value="UniProtKB-UniRule"/>
</dbReference>
<dbReference type="GO" id="GO:0070980">
    <property type="term" value="P:biphenyl catabolic process"/>
    <property type="evidence" value="ECO:0007669"/>
    <property type="project" value="UniProtKB-UniRule"/>
</dbReference>
<dbReference type="Gene3D" id="3.40.50.1820">
    <property type="entry name" value="alpha/beta hydrolase"/>
    <property type="match status" value="1"/>
</dbReference>
<dbReference type="HAMAP" id="MF_01688">
    <property type="entry name" value="Biphenyl_BphD"/>
    <property type="match status" value="1"/>
</dbReference>
<dbReference type="InterPro" id="IPR000073">
    <property type="entry name" value="AB_hydrolase_1"/>
</dbReference>
<dbReference type="InterPro" id="IPR029058">
    <property type="entry name" value="AB_hydrolase_fold"/>
</dbReference>
<dbReference type="InterPro" id="IPR050266">
    <property type="entry name" value="AB_hydrolase_sf"/>
</dbReference>
<dbReference type="InterPro" id="IPR000639">
    <property type="entry name" value="Epox_hydrolase-like"/>
</dbReference>
<dbReference type="InterPro" id="IPR017727">
    <property type="entry name" value="HOPD_hydrolase_BphD"/>
</dbReference>
<dbReference type="NCBIfam" id="TIGR03343">
    <property type="entry name" value="biphenyl_bphD"/>
    <property type="match status" value="1"/>
</dbReference>
<dbReference type="PANTHER" id="PTHR43798:SF33">
    <property type="entry name" value="HYDROLASE, PUTATIVE (AFU_ORTHOLOGUE AFUA_2G14860)-RELATED"/>
    <property type="match status" value="1"/>
</dbReference>
<dbReference type="PANTHER" id="PTHR43798">
    <property type="entry name" value="MONOACYLGLYCEROL LIPASE"/>
    <property type="match status" value="1"/>
</dbReference>
<dbReference type="Pfam" id="PF00561">
    <property type="entry name" value="Abhydrolase_1"/>
    <property type="match status" value="1"/>
</dbReference>
<dbReference type="PRINTS" id="PR00111">
    <property type="entry name" value="ABHYDROLASE"/>
</dbReference>
<dbReference type="PRINTS" id="PR00412">
    <property type="entry name" value="EPOXHYDRLASE"/>
</dbReference>
<dbReference type="SUPFAM" id="SSF53474">
    <property type="entry name" value="alpha/beta-Hydrolases"/>
    <property type="match status" value="1"/>
</dbReference>
<sequence>MTELTEGNTSKFAKISEKDLSDFLIHYNEAGEGEAVIMLHGGGPGAGGWSNYYRNIGPFVDAGYRVILKDSPGFNKSDVVVMDEQRGLVNARAVKGLMDALGIERAHLVGNSMGGATALNFAIEYPERLGKMILMGPGGLGASHFAPMPMEGIKLLFKLYAEPSYETLRQMIQVFLYDQTNITEELLQGRWEAIQRNPEHLKNFLVSAQRAPLSSWDVSPRLGEIKAKTLVTWGRDDRFVPLDHGLKLVWGIGDARLHVFSQCGHWAQWEKADEFNRLAIDFLRQR</sequence>
<comment type="function">
    <text evidence="1">Catalyzes an unusual C-C bond hydrolysis of 2-hydroxy-6-oxo-6-phenylhexa-2,4-dienoic acid (HOPDA) to produce benzoic acid and 2-hydroxy-2,4-pentadienoic acid (HPD).</text>
</comment>
<comment type="catalytic activity">
    <reaction evidence="1">
        <text>2,6-dioxo-6-phenylhexa-3-enoate + H2O = 2-oxopent-4-enoate + benzoate + H(+)</text>
        <dbReference type="Rhea" id="RHEA:17161"/>
        <dbReference type="ChEBI" id="CHEBI:11641"/>
        <dbReference type="ChEBI" id="CHEBI:15377"/>
        <dbReference type="ChEBI" id="CHEBI:15378"/>
        <dbReference type="ChEBI" id="CHEBI:16150"/>
        <dbReference type="ChEBI" id="CHEBI:64675"/>
        <dbReference type="EC" id="3.7.1.8"/>
    </reaction>
</comment>
<comment type="pathway">
    <text evidence="1">Xenobiotic degradation; biphenyl degradation; 2-hydroxy-2,4-pentadienoate and benzoate from biphenyl: step 4/4.</text>
</comment>
<comment type="subunit">
    <text evidence="1">Homodimer.</text>
</comment>
<comment type="similarity">
    <text evidence="1">Belongs to the AB hydrolase superfamily. BphD family.</text>
</comment>
<proteinExistence type="inferred from homology"/>
<evidence type="ECO:0000255" key="1">
    <source>
        <dbReference type="HAMAP-Rule" id="MF_01688"/>
    </source>
</evidence>
<name>BPHD_COMTE</name>
<accession>Q59324</accession>
<gene>
    <name evidence="1" type="primary">bphD</name>
</gene>
<organism>
    <name type="scientific">Comamonas testosteroni</name>
    <name type="common">Pseudomonas testosteroni</name>
    <dbReference type="NCBI Taxonomy" id="285"/>
    <lineage>
        <taxon>Bacteria</taxon>
        <taxon>Pseudomonadati</taxon>
        <taxon>Pseudomonadota</taxon>
        <taxon>Betaproteobacteria</taxon>
        <taxon>Burkholderiales</taxon>
        <taxon>Comamonadaceae</taxon>
        <taxon>Comamonas</taxon>
    </lineage>
</organism>